<proteinExistence type="inferred from homology"/>
<accession>B2HKW6</accession>
<evidence type="ECO:0000255" key="1">
    <source>
        <dbReference type="HAMAP-Rule" id="MF_00102"/>
    </source>
</evidence>
<evidence type="ECO:0000305" key="2"/>
<comment type="function">
    <text evidence="1">Catalyzes the conversion of 4-hydroxy-tetrahydrodipicolinate (HTPA) to tetrahydrodipicolinate.</text>
</comment>
<comment type="catalytic activity">
    <reaction evidence="1">
        <text>(S)-2,3,4,5-tetrahydrodipicolinate + NAD(+) + H2O = (2S,4S)-4-hydroxy-2,3,4,5-tetrahydrodipicolinate + NADH + H(+)</text>
        <dbReference type="Rhea" id="RHEA:35323"/>
        <dbReference type="ChEBI" id="CHEBI:15377"/>
        <dbReference type="ChEBI" id="CHEBI:15378"/>
        <dbReference type="ChEBI" id="CHEBI:16845"/>
        <dbReference type="ChEBI" id="CHEBI:57540"/>
        <dbReference type="ChEBI" id="CHEBI:57945"/>
        <dbReference type="ChEBI" id="CHEBI:67139"/>
        <dbReference type="EC" id="1.17.1.8"/>
    </reaction>
</comment>
<comment type="catalytic activity">
    <reaction evidence="1">
        <text>(S)-2,3,4,5-tetrahydrodipicolinate + NADP(+) + H2O = (2S,4S)-4-hydroxy-2,3,4,5-tetrahydrodipicolinate + NADPH + H(+)</text>
        <dbReference type="Rhea" id="RHEA:35331"/>
        <dbReference type="ChEBI" id="CHEBI:15377"/>
        <dbReference type="ChEBI" id="CHEBI:15378"/>
        <dbReference type="ChEBI" id="CHEBI:16845"/>
        <dbReference type="ChEBI" id="CHEBI:57783"/>
        <dbReference type="ChEBI" id="CHEBI:58349"/>
        <dbReference type="ChEBI" id="CHEBI:67139"/>
        <dbReference type="EC" id="1.17.1.8"/>
    </reaction>
</comment>
<comment type="pathway">
    <text evidence="1">Amino-acid biosynthesis; L-lysine biosynthesis via DAP pathway; (S)-tetrahydrodipicolinate from L-aspartate: step 4/4.</text>
</comment>
<comment type="subcellular location">
    <subcellularLocation>
        <location evidence="1">Cytoplasm</location>
    </subcellularLocation>
</comment>
<comment type="similarity">
    <text evidence="1">Belongs to the DapB family.</text>
</comment>
<comment type="caution">
    <text evidence="2">Was originally thought to be a dihydrodipicolinate reductase (DHDPR), catalyzing the conversion of dihydrodipicolinate to tetrahydrodipicolinate. However, it was shown in E.coli that the substrate of the enzymatic reaction is not dihydrodipicolinate (DHDP) but in fact (2S,4S)-4-hydroxy-2,3,4,5-tetrahydrodipicolinic acid (HTPA), the product released by the DapA-catalyzed reaction.</text>
</comment>
<organism>
    <name type="scientific">Mycobacterium marinum (strain ATCC BAA-535 / M)</name>
    <dbReference type="NCBI Taxonomy" id="216594"/>
    <lineage>
        <taxon>Bacteria</taxon>
        <taxon>Bacillati</taxon>
        <taxon>Actinomycetota</taxon>
        <taxon>Actinomycetes</taxon>
        <taxon>Mycobacteriales</taxon>
        <taxon>Mycobacteriaceae</taxon>
        <taxon>Mycobacterium</taxon>
        <taxon>Mycobacterium ulcerans group</taxon>
    </lineage>
</organism>
<feature type="chain" id="PRO_1000093981" description="4-hydroxy-tetrahydrodipicolinate reductase">
    <location>
        <begin position="1"/>
        <end position="245"/>
    </location>
</feature>
<feature type="active site" description="Proton donor/acceptor" evidence="1">
    <location>
        <position position="132"/>
    </location>
</feature>
<feature type="active site" description="Proton donor" evidence="1">
    <location>
        <position position="136"/>
    </location>
</feature>
<feature type="binding site" evidence="1">
    <location>
        <begin position="7"/>
        <end position="12"/>
    </location>
    <ligand>
        <name>NAD(+)</name>
        <dbReference type="ChEBI" id="CHEBI:57540"/>
    </ligand>
</feature>
<feature type="binding site" evidence="1">
    <location>
        <begin position="75"/>
        <end position="77"/>
    </location>
    <ligand>
        <name>NAD(+)</name>
        <dbReference type="ChEBI" id="CHEBI:57540"/>
    </ligand>
</feature>
<feature type="binding site" evidence="1">
    <location>
        <begin position="102"/>
        <end position="105"/>
    </location>
    <ligand>
        <name>NAD(+)</name>
        <dbReference type="ChEBI" id="CHEBI:57540"/>
    </ligand>
</feature>
<feature type="binding site" evidence="1">
    <location>
        <position position="133"/>
    </location>
    <ligand>
        <name>(S)-2,3,4,5-tetrahydrodipicolinate</name>
        <dbReference type="ChEBI" id="CHEBI:16845"/>
    </ligand>
</feature>
<feature type="binding site" evidence="1">
    <location>
        <begin position="142"/>
        <end position="143"/>
    </location>
    <ligand>
        <name>(S)-2,3,4,5-tetrahydrodipicolinate</name>
        <dbReference type="ChEBI" id="CHEBI:16845"/>
    </ligand>
</feature>
<sequence length="245" mass="25661">MRVGVLGAKGKVGATMVSAVESAADLTLSAEVDAGDPLSTLTETNTEAVIDFTHPDVVMGNLEFLIDNGIHAVVGTTGFTAERVEQVQSWLAKKPSTAVLIAPNFAIGAVLSMHFAKQAAPFFDSAEIIELHHPQKADAPSGTATRTAKLIAEAREGLAPNPDATSTSLPGARGADVDGIPVHAVRLAGLVAHQEVLFGTQGETLTIRHDSLDRTSFVPGVLLAVRRVRERPGLTIGIEPLLNLQ</sequence>
<keyword id="KW-0028">Amino-acid biosynthesis</keyword>
<keyword id="KW-0963">Cytoplasm</keyword>
<keyword id="KW-0220">Diaminopimelate biosynthesis</keyword>
<keyword id="KW-0457">Lysine biosynthesis</keyword>
<keyword id="KW-0520">NAD</keyword>
<keyword id="KW-0521">NADP</keyword>
<keyword id="KW-0560">Oxidoreductase</keyword>
<keyword id="KW-1185">Reference proteome</keyword>
<protein>
    <recommendedName>
        <fullName evidence="1">4-hydroxy-tetrahydrodipicolinate reductase</fullName>
        <shortName evidence="1">HTPA reductase</shortName>
        <ecNumber evidence="1">1.17.1.8</ecNumber>
    </recommendedName>
</protein>
<name>DAPB_MYCMM</name>
<dbReference type="EC" id="1.17.1.8" evidence="1"/>
<dbReference type="EMBL" id="CP000854">
    <property type="protein sequence ID" value="ACC40387.1"/>
    <property type="molecule type" value="Genomic_DNA"/>
</dbReference>
<dbReference type="RefSeq" id="WP_012393728.1">
    <property type="nucleotide sequence ID" value="NC_010612.1"/>
</dbReference>
<dbReference type="SMR" id="B2HKW6"/>
<dbReference type="STRING" id="216594.MMAR_1938"/>
<dbReference type="GeneID" id="93437823"/>
<dbReference type="KEGG" id="mmi:MMAR_1938"/>
<dbReference type="eggNOG" id="COG0289">
    <property type="taxonomic scope" value="Bacteria"/>
</dbReference>
<dbReference type="HOGENOM" id="CLU_047479_0_1_11"/>
<dbReference type="OrthoDB" id="9790352at2"/>
<dbReference type="UniPathway" id="UPA00034">
    <property type="reaction ID" value="UER00018"/>
</dbReference>
<dbReference type="Proteomes" id="UP000001190">
    <property type="component" value="Chromosome"/>
</dbReference>
<dbReference type="GO" id="GO:0005829">
    <property type="term" value="C:cytosol"/>
    <property type="evidence" value="ECO:0007669"/>
    <property type="project" value="TreeGrafter"/>
</dbReference>
<dbReference type="GO" id="GO:0008839">
    <property type="term" value="F:4-hydroxy-tetrahydrodipicolinate reductase"/>
    <property type="evidence" value="ECO:0007669"/>
    <property type="project" value="UniProtKB-EC"/>
</dbReference>
<dbReference type="GO" id="GO:0051287">
    <property type="term" value="F:NAD binding"/>
    <property type="evidence" value="ECO:0007669"/>
    <property type="project" value="UniProtKB-UniRule"/>
</dbReference>
<dbReference type="GO" id="GO:0050661">
    <property type="term" value="F:NADP binding"/>
    <property type="evidence" value="ECO:0007669"/>
    <property type="project" value="UniProtKB-UniRule"/>
</dbReference>
<dbReference type="GO" id="GO:0016726">
    <property type="term" value="F:oxidoreductase activity, acting on CH or CH2 groups, NAD or NADP as acceptor"/>
    <property type="evidence" value="ECO:0007669"/>
    <property type="project" value="UniProtKB-UniRule"/>
</dbReference>
<dbReference type="GO" id="GO:0019877">
    <property type="term" value="P:diaminopimelate biosynthetic process"/>
    <property type="evidence" value="ECO:0007669"/>
    <property type="project" value="UniProtKB-UniRule"/>
</dbReference>
<dbReference type="GO" id="GO:0009089">
    <property type="term" value="P:lysine biosynthetic process via diaminopimelate"/>
    <property type="evidence" value="ECO:0007669"/>
    <property type="project" value="UniProtKB-UniRule"/>
</dbReference>
<dbReference type="CDD" id="cd02274">
    <property type="entry name" value="DHDPR_N"/>
    <property type="match status" value="1"/>
</dbReference>
<dbReference type="FunFam" id="3.30.360.10:FF:000009">
    <property type="entry name" value="4-hydroxy-tetrahydrodipicolinate reductase"/>
    <property type="match status" value="1"/>
</dbReference>
<dbReference type="Gene3D" id="3.30.360.10">
    <property type="entry name" value="Dihydrodipicolinate Reductase, domain 2"/>
    <property type="match status" value="1"/>
</dbReference>
<dbReference type="Gene3D" id="3.40.50.720">
    <property type="entry name" value="NAD(P)-binding Rossmann-like Domain"/>
    <property type="match status" value="1"/>
</dbReference>
<dbReference type="HAMAP" id="MF_00102">
    <property type="entry name" value="DapB"/>
    <property type="match status" value="1"/>
</dbReference>
<dbReference type="InterPro" id="IPR022663">
    <property type="entry name" value="DapB_C"/>
</dbReference>
<dbReference type="InterPro" id="IPR000846">
    <property type="entry name" value="DapB_N"/>
</dbReference>
<dbReference type="InterPro" id="IPR022664">
    <property type="entry name" value="DapB_N_CS"/>
</dbReference>
<dbReference type="InterPro" id="IPR023940">
    <property type="entry name" value="DHDPR_bac"/>
</dbReference>
<dbReference type="InterPro" id="IPR036291">
    <property type="entry name" value="NAD(P)-bd_dom_sf"/>
</dbReference>
<dbReference type="NCBIfam" id="TIGR00036">
    <property type="entry name" value="dapB"/>
    <property type="match status" value="1"/>
</dbReference>
<dbReference type="PANTHER" id="PTHR20836:SF0">
    <property type="entry name" value="4-HYDROXY-TETRAHYDRODIPICOLINATE REDUCTASE 1, CHLOROPLASTIC-RELATED"/>
    <property type="match status" value="1"/>
</dbReference>
<dbReference type="PANTHER" id="PTHR20836">
    <property type="entry name" value="DIHYDRODIPICOLINATE REDUCTASE"/>
    <property type="match status" value="1"/>
</dbReference>
<dbReference type="Pfam" id="PF05173">
    <property type="entry name" value="DapB_C"/>
    <property type="match status" value="1"/>
</dbReference>
<dbReference type="Pfam" id="PF01113">
    <property type="entry name" value="DapB_N"/>
    <property type="match status" value="1"/>
</dbReference>
<dbReference type="PIRSF" id="PIRSF000161">
    <property type="entry name" value="DHPR"/>
    <property type="match status" value="1"/>
</dbReference>
<dbReference type="SUPFAM" id="SSF55347">
    <property type="entry name" value="Glyceraldehyde-3-phosphate dehydrogenase-like, C-terminal domain"/>
    <property type="match status" value="1"/>
</dbReference>
<dbReference type="SUPFAM" id="SSF51735">
    <property type="entry name" value="NAD(P)-binding Rossmann-fold domains"/>
    <property type="match status" value="1"/>
</dbReference>
<dbReference type="PROSITE" id="PS01298">
    <property type="entry name" value="DAPB"/>
    <property type="match status" value="1"/>
</dbReference>
<gene>
    <name evidence="1" type="primary">dapB</name>
    <name type="ordered locus">MMAR_1938</name>
</gene>
<reference key="1">
    <citation type="journal article" date="2008" name="Genome Res.">
        <title>Insights from the complete genome sequence of Mycobacterium marinum on the evolution of Mycobacterium tuberculosis.</title>
        <authorList>
            <person name="Stinear T.P."/>
            <person name="Seemann T."/>
            <person name="Harrison P.F."/>
            <person name="Jenkin G.A."/>
            <person name="Davies J.K."/>
            <person name="Johnson P.D."/>
            <person name="Abdellah Z."/>
            <person name="Arrowsmith C."/>
            <person name="Chillingworth T."/>
            <person name="Churcher C."/>
            <person name="Clarke K."/>
            <person name="Cronin A."/>
            <person name="Davis P."/>
            <person name="Goodhead I."/>
            <person name="Holroyd N."/>
            <person name="Jagels K."/>
            <person name="Lord A."/>
            <person name="Moule S."/>
            <person name="Mungall K."/>
            <person name="Norbertczak H."/>
            <person name="Quail M.A."/>
            <person name="Rabbinowitsch E."/>
            <person name="Walker D."/>
            <person name="White B."/>
            <person name="Whitehead S."/>
            <person name="Small P.L."/>
            <person name="Brosch R."/>
            <person name="Ramakrishnan L."/>
            <person name="Fischbach M.A."/>
            <person name="Parkhill J."/>
            <person name="Cole S.T."/>
        </authorList>
    </citation>
    <scope>NUCLEOTIDE SEQUENCE [LARGE SCALE GENOMIC DNA]</scope>
    <source>
        <strain>ATCC BAA-535 / M</strain>
    </source>
</reference>